<evidence type="ECO:0000250" key="1">
    <source>
        <dbReference type="UniProtKB" id="O14775"/>
    </source>
</evidence>
<evidence type="ECO:0000250" key="2">
    <source>
        <dbReference type="UniProtKB" id="P62881"/>
    </source>
</evidence>
<evidence type="ECO:0000255" key="3">
    <source>
        <dbReference type="PROSITE-ProRule" id="PRU00221"/>
    </source>
</evidence>
<evidence type="ECO:0000256" key="4">
    <source>
        <dbReference type="SAM" id="MobiDB-lite"/>
    </source>
</evidence>
<evidence type="ECO:0000269" key="5">
    <source>
    </source>
</evidence>
<evidence type="ECO:0000305" key="6"/>
<evidence type="ECO:0000312" key="7">
    <source>
        <dbReference type="ZFIN" id="ZDB-GENE-070112-342"/>
    </source>
</evidence>
<dbReference type="EMBL" id="AL954697">
    <property type="status" value="NOT_ANNOTATED_CDS"/>
    <property type="molecule type" value="Genomic_DNA"/>
</dbReference>
<dbReference type="EMBL" id="BC129375">
    <property type="protein sequence ID" value="AAI29376.1"/>
    <property type="molecule type" value="mRNA"/>
</dbReference>
<dbReference type="RefSeq" id="NP_001073650.1">
    <property type="nucleotide sequence ID" value="NM_001080181.2"/>
</dbReference>
<dbReference type="SMR" id="A1L271"/>
<dbReference type="FunCoup" id="A1L271">
    <property type="interactions" value="77"/>
</dbReference>
<dbReference type="STRING" id="7955.ENSDARP00000140306"/>
<dbReference type="PaxDb" id="7955-ENSDARP00000011435"/>
<dbReference type="PeptideAtlas" id="A1L271"/>
<dbReference type="Ensembl" id="ENSDART00000168016">
    <property type="protein sequence ID" value="ENSDARP00000140306"/>
    <property type="gene ID" value="ENSDARG00000099685"/>
</dbReference>
<dbReference type="GeneID" id="562813"/>
<dbReference type="KEGG" id="dre:562813"/>
<dbReference type="AGR" id="ZFIN:ZDB-GENE-070112-342"/>
<dbReference type="CTD" id="562813"/>
<dbReference type="ZFIN" id="ZDB-GENE-070112-342">
    <property type="gene designation" value="gnb5a"/>
</dbReference>
<dbReference type="eggNOG" id="KOG0286">
    <property type="taxonomic scope" value="Eukaryota"/>
</dbReference>
<dbReference type="HOGENOM" id="CLU_000288_57_34_1"/>
<dbReference type="InParanoid" id="A1L271"/>
<dbReference type="OMA" id="LDNKCTI"/>
<dbReference type="OrthoDB" id="10255630at2759"/>
<dbReference type="PhylomeDB" id="A1L271"/>
<dbReference type="TreeFam" id="TF106149"/>
<dbReference type="Reactome" id="R-DRE-381676">
    <property type="pathway name" value="Glucagon-like Peptide-1 (GLP1) regulates insulin secretion"/>
</dbReference>
<dbReference type="Reactome" id="R-DRE-392170">
    <property type="pathway name" value="ADP signalling through P2Y purinoceptor 12"/>
</dbReference>
<dbReference type="Reactome" id="R-DRE-400042">
    <property type="pathway name" value="Adrenaline,noradrenaline inhibits insulin secretion"/>
</dbReference>
<dbReference type="Reactome" id="R-DRE-416476">
    <property type="pathway name" value="G alpha (q) signalling events"/>
</dbReference>
<dbReference type="Reactome" id="R-DRE-418594">
    <property type="pathway name" value="G alpha (i) signalling events"/>
</dbReference>
<dbReference type="Reactome" id="R-DRE-428930">
    <property type="pathway name" value="Thromboxane signalling through TP receptor"/>
</dbReference>
<dbReference type="Reactome" id="R-DRE-432040">
    <property type="pathway name" value="Vasopressin regulates renal water homeostasis via Aquaporins"/>
</dbReference>
<dbReference type="Reactome" id="R-DRE-456926">
    <property type="pathway name" value="Thrombin signalling through proteinase activated receptors (PARs)"/>
</dbReference>
<dbReference type="Reactome" id="R-DRE-6814122">
    <property type="pathway name" value="Cooperation of PDCL (PhLP1) and TRiC/CCT in G-protein beta folding"/>
</dbReference>
<dbReference type="PRO" id="PR:A1L271"/>
<dbReference type="Proteomes" id="UP000000437">
    <property type="component" value="Chromosome 25"/>
</dbReference>
<dbReference type="Bgee" id="ENSDARG00000099685">
    <property type="expression patterns" value="Expressed in brain and 9 other cell types or tissues"/>
</dbReference>
<dbReference type="GO" id="GO:0005737">
    <property type="term" value="C:cytoplasm"/>
    <property type="evidence" value="ECO:0000318"/>
    <property type="project" value="GO_Central"/>
</dbReference>
<dbReference type="GO" id="GO:0005834">
    <property type="term" value="C:heterotrimeric G-protein complex"/>
    <property type="evidence" value="ECO:0000318"/>
    <property type="project" value="GO_Central"/>
</dbReference>
<dbReference type="GO" id="GO:0030159">
    <property type="term" value="F:signaling receptor complex adaptor activity"/>
    <property type="evidence" value="ECO:0000318"/>
    <property type="project" value="GO_Central"/>
</dbReference>
<dbReference type="GO" id="GO:0007212">
    <property type="term" value="P:G protein-coupled dopamine receptor signaling pathway"/>
    <property type="evidence" value="ECO:0000318"/>
    <property type="project" value="GO_Central"/>
</dbReference>
<dbReference type="GO" id="GO:0060047">
    <property type="term" value="P:heart contraction"/>
    <property type="evidence" value="ECO:0000316"/>
    <property type="project" value="ZFIN"/>
</dbReference>
<dbReference type="GO" id="GO:0007634">
    <property type="term" value="P:optokinetic behavior"/>
    <property type="evidence" value="ECO:0000316"/>
    <property type="project" value="ZFIN"/>
</dbReference>
<dbReference type="GO" id="GO:0036269">
    <property type="term" value="P:swimming behavior"/>
    <property type="evidence" value="ECO:0000316"/>
    <property type="project" value="ZFIN"/>
</dbReference>
<dbReference type="CDD" id="cd00200">
    <property type="entry name" value="WD40"/>
    <property type="match status" value="1"/>
</dbReference>
<dbReference type="FunFam" id="2.130.10.10:FF:000020">
    <property type="entry name" value="Guanine nucleotide-binding protein beta subunit"/>
    <property type="match status" value="1"/>
</dbReference>
<dbReference type="Gene3D" id="2.130.10.10">
    <property type="entry name" value="YVTN repeat-like/Quinoprotein amine dehydrogenase"/>
    <property type="match status" value="1"/>
</dbReference>
<dbReference type="InterPro" id="IPR020472">
    <property type="entry name" value="G-protein_beta_WD-40_rep"/>
</dbReference>
<dbReference type="InterPro" id="IPR001632">
    <property type="entry name" value="Gprotein_B"/>
</dbReference>
<dbReference type="InterPro" id="IPR016346">
    <property type="entry name" value="Guanine_nucleotide-bd_bsu"/>
</dbReference>
<dbReference type="InterPro" id="IPR015943">
    <property type="entry name" value="WD40/YVTN_repeat-like_dom_sf"/>
</dbReference>
<dbReference type="InterPro" id="IPR019775">
    <property type="entry name" value="WD40_repeat_CS"/>
</dbReference>
<dbReference type="InterPro" id="IPR036322">
    <property type="entry name" value="WD40_repeat_dom_sf"/>
</dbReference>
<dbReference type="InterPro" id="IPR001680">
    <property type="entry name" value="WD40_rpt"/>
</dbReference>
<dbReference type="PANTHER" id="PTHR19850">
    <property type="entry name" value="GUANINE NUCLEOTIDE-BINDING PROTEIN BETA G PROTEIN BETA"/>
    <property type="match status" value="1"/>
</dbReference>
<dbReference type="Pfam" id="PF25391">
    <property type="entry name" value="WD40_Gbeta"/>
    <property type="match status" value="1"/>
</dbReference>
<dbReference type="PIRSF" id="PIRSF002394">
    <property type="entry name" value="GN-bd_beta"/>
    <property type="match status" value="1"/>
</dbReference>
<dbReference type="PRINTS" id="PR00319">
    <property type="entry name" value="GPROTEINB"/>
</dbReference>
<dbReference type="PRINTS" id="PR00320">
    <property type="entry name" value="GPROTEINBRPT"/>
</dbReference>
<dbReference type="SMART" id="SM00320">
    <property type="entry name" value="WD40"/>
    <property type="match status" value="7"/>
</dbReference>
<dbReference type="SUPFAM" id="SSF50978">
    <property type="entry name" value="WD40 repeat-like"/>
    <property type="match status" value="1"/>
</dbReference>
<dbReference type="PROSITE" id="PS00678">
    <property type="entry name" value="WD_REPEATS_1"/>
    <property type="match status" value="3"/>
</dbReference>
<dbReference type="PROSITE" id="PS50082">
    <property type="entry name" value="WD_REPEATS_2"/>
    <property type="match status" value="6"/>
</dbReference>
<dbReference type="PROSITE" id="PS50294">
    <property type="entry name" value="WD_REPEATS_REGION"/>
    <property type="match status" value="1"/>
</dbReference>
<name>GNB5A_DANRE</name>
<feature type="chain" id="PRO_0000439759" description="Guanine nucleotide-binding protein subunit beta-5a">
    <location>
        <begin position="1"/>
        <end position="355"/>
    </location>
</feature>
<feature type="repeat" description="WD 1" evidence="3">
    <location>
        <begin position="63"/>
        <end position="102"/>
    </location>
</feature>
<feature type="repeat" description="WD 2" evidence="3">
    <location>
        <begin position="105"/>
        <end position="144"/>
    </location>
</feature>
<feature type="repeat" description="WD 3" evidence="3">
    <location>
        <begin position="153"/>
        <end position="194"/>
    </location>
</feature>
<feature type="repeat" description="WD 4" evidence="3">
    <location>
        <begin position="195"/>
        <end position="238"/>
    </location>
</feature>
<feature type="repeat" description="WD 5" evidence="3">
    <location>
        <begin position="239"/>
        <end position="278"/>
    </location>
</feature>
<feature type="repeat" description="WD 6" evidence="3">
    <location>
        <begin position="280"/>
        <end position="322"/>
    </location>
</feature>
<feature type="repeat" description="WD 7" evidence="3">
    <location>
        <begin position="325"/>
        <end position="355"/>
    </location>
</feature>
<feature type="region of interest" description="Disordered" evidence="4">
    <location>
        <begin position="1"/>
        <end position="23"/>
    </location>
</feature>
<accession>A1L271</accession>
<protein>
    <recommendedName>
        <fullName>Guanine nucleotide-binding protein subunit beta-5a</fullName>
    </recommendedName>
</protein>
<sequence length="355" mass="38831">MAAQEEPAQPGDSLATLKSESDTLKSKLEEERAKLHDVELHQVAEKIEALGQFVMKTRRTLKGHGNKVLCMDWCKDKRRIVSSSQDGKVIVWDAFTTNKEHAVTMPCTWVMACAYAPSGCAVACGGLDNKCSVYPLSLDKNENLAAKKKSVAMHTNYLSACCFTNSDMQILTSSGDGTCALWDVESGQMLQSFHGHAADVLCLDLAPSETGNTFVSGGCDKKACVWDMRTGQCVQSFESHDSDINSVRYYPSGDAFASGSDDATCRLYDLRADREVAIYSKESIIFGASSVDFSLSGRLLFGGYNDYTINVWDVLKGARVSILFGHENRVSTLRVSPDGTAFCSGSWDHTLRIWA</sequence>
<organism>
    <name type="scientific">Danio rerio</name>
    <name type="common">Zebrafish</name>
    <name type="synonym">Brachydanio rerio</name>
    <dbReference type="NCBI Taxonomy" id="7955"/>
    <lineage>
        <taxon>Eukaryota</taxon>
        <taxon>Metazoa</taxon>
        <taxon>Chordata</taxon>
        <taxon>Craniata</taxon>
        <taxon>Vertebrata</taxon>
        <taxon>Euteleostomi</taxon>
        <taxon>Actinopterygii</taxon>
        <taxon>Neopterygii</taxon>
        <taxon>Teleostei</taxon>
        <taxon>Ostariophysi</taxon>
        <taxon>Cypriniformes</taxon>
        <taxon>Danionidae</taxon>
        <taxon>Danioninae</taxon>
        <taxon>Danio</taxon>
    </lineage>
</organism>
<keyword id="KW-0472">Membrane</keyword>
<keyword id="KW-1185">Reference proteome</keyword>
<keyword id="KW-0677">Repeat</keyword>
<keyword id="KW-0807">Transducer</keyword>
<keyword id="KW-0853">WD repeat</keyword>
<reference key="1">
    <citation type="journal article" date="2013" name="Nature">
        <title>The zebrafish reference genome sequence and its relationship to the human genome.</title>
        <authorList>
            <person name="Howe K."/>
            <person name="Clark M.D."/>
            <person name="Torroja C.F."/>
            <person name="Torrance J."/>
            <person name="Berthelot C."/>
            <person name="Muffato M."/>
            <person name="Collins J.E."/>
            <person name="Humphray S."/>
            <person name="McLaren K."/>
            <person name="Matthews L."/>
            <person name="McLaren S."/>
            <person name="Sealy I."/>
            <person name="Caccamo M."/>
            <person name="Churcher C."/>
            <person name="Scott C."/>
            <person name="Barrett J.C."/>
            <person name="Koch R."/>
            <person name="Rauch G.J."/>
            <person name="White S."/>
            <person name="Chow W."/>
            <person name="Kilian B."/>
            <person name="Quintais L.T."/>
            <person name="Guerra-Assuncao J.A."/>
            <person name="Zhou Y."/>
            <person name="Gu Y."/>
            <person name="Yen J."/>
            <person name="Vogel J.H."/>
            <person name="Eyre T."/>
            <person name="Redmond S."/>
            <person name="Banerjee R."/>
            <person name="Chi J."/>
            <person name="Fu B."/>
            <person name="Langley E."/>
            <person name="Maguire S.F."/>
            <person name="Laird G.K."/>
            <person name="Lloyd D."/>
            <person name="Kenyon E."/>
            <person name="Donaldson S."/>
            <person name="Sehra H."/>
            <person name="Almeida-King J."/>
            <person name="Loveland J."/>
            <person name="Trevanion S."/>
            <person name="Jones M."/>
            <person name="Quail M."/>
            <person name="Willey D."/>
            <person name="Hunt A."/>
            <person name="Burton J."/>
            <person name="Sims S."/>
            <person name="McLay K."/>
            <person name="Plumb B."/>
            <person name="Davis J."/>
            <person name="Clee C."/>
            <person name="Oliver K."/>
            <person name="Clark R."/>
            <person name="Riddle C."/>
            <person name="Elliot D."/>
            <person name="Threadgold G."/>
            <person name="Harden G."/>
            <person name="Ware D."/>
            <person name="Begum S."/>
            <person name="Mortimore B."/>
            <person name="Kerry G."/>
            <person name="Heath P."/>
            <person name="Phillimore B."/>
            <person name="Tracey A."/>
            <person name="Corby N."/>
            <person name="Dunn M."/>
            <person name="Johnson C."/>
            <person name="Wood J."/>
            <person name="Clark S."/>
            <person name="Pelan S."/>
            <person name="Griffiths G."/>
            <person name="Smith M."/>
            <person name="Glithero R."/>
            <person name="Howden P."/>
            <person name="Barker N."/>
            <person name="Lloyd C."/>
            <person name="Stevens C."/>
            <person name="Harley J."/>
            <person name="Holt K."/>
            <person name="Panagiotidis G."/>
            <person name="Lovell J."/>
            <person name="Beasley H."/>
            <person name="Henderson C."/>
            <person name="Gordon D."/>
            <person name="Auger K."/>
            <person name="Wright D."/>
            <person name="Collins J."/>
            <person name="Raisen C."/>
            <person name="Dyer L."/>
            <person name="Leung K."/>
            <person name="Robertson L."/>
            <person name="Ambridge K."/>
            <person name="Leongamornlert D."/>
            <person name="McGuire S."/>
            <person name="Gilderthorp R."/>
            <person name="Griffiths C."/>
            <person name="Manthravadi D."/>
            <person name="Nichol S."/>
            <person name="Barker G."/>
            <person name="Whitehead S."/>
            <person name="Kay M."/>
            <person name="Brown J."/>
            <person name="Murnane C."/>
            <person name="Gray E."/>
            <person name="Humphries M."/>
            <person name="Sycamore N."/>
            <person name="Barker D."/>
            <person name="Saunders D."/>
            <person name="Wallis J."/>
            <person name="Babbage A."/>
            <person name="Hammond S."/>
            <person name="Mashreghi-Mohammadi M."/>
            <person name="Barr L."/>
            <person name="Martin S."/>
            <person name="Wray P."/>
            <person name="Ellington A."/>
            <person name="Matthews N."/>
            <person name="Ellwood M."/>
            <person name="Woodmansey R."/>
            <person name="Clark G."/>
            <person name="Cooper J."/>
            <person name="Tromans A."/>
            <person name="Grafham D."/>
            <person name="Skuce C."/>
            <person name="Pandian R."/>
            <person name="Andrews R."/>
            <person name="Harrison E."/>
            <person name="Kimberley A."/>
            <person name="Garnett J."/>
            <person name="Fosker N."/>
            <person name="Hall R."/>
            <person name="Garner P."/>
            <person name="Kelly D."/>
            <person name="Bird C."/>
            <person name="Palmer S."/>
            <person name="Gehring I."/>
            <person name="Berger A."/>
            <person name="Dooley C.M."/>
            <person name="Ersan-Urun Z."/>
            <person name="Eser C."/>
            <person name="Geiger H."/>
            <person name="Geisler M."/>
            <person name="Karotki L."/>
            <person name="Kirn A."/>
            <person name="Konantz J."/>
            <person name="Konantz M."/>
            <person name="Oberlander M."/>
            <person name="Rudolph-Geiger S."/>
            <person name="Teucke M."/>
            <person name="Lanz C."/>
            <person name="Raddatz G."/>
            <person name="Osoegawa K."/>
            <person name="Zhu B."/>
            <person name="Rapp A."/>
            <person name="Widaa S."/>
            <person name="Langford C."/>
            <person name="Yang F."/>
            <person name="Schuster S.C."/>
            <person name="Carter N.P."/>
            <person name="Harrow J."/>
            <person name="Ning Z."/>
            <person name="Herrero J."/>
            <person name="Searle S.M."/>
            <person name="Enright A."/>
            <person name="Geisler R."/>
            <person name="Plasterk R.H."/>
            <person name="Lee C."/>
            <person name="Westerfield M."/>
            <person name="de Jong P.J."/>
            <person name="Zon L.I."/>
            <person name="Postlethwait J.H."/>
            <person name="Nusslein-Volhard C."/>
            <person name="Hubbard T.J."/>
            <person name="Roest Crollius H."/>
            <person name="Rogers J."/>
            <person name="Stemple D.L."/>
        </authorList>
    </citation>
    <scope>NUCLEOTIDE SEQUENCE [LARGE SCALE GENOMIC DNA]</scope>
    <source>
        <strain>Tuebingen</strain>
    </source>
</reference>
<reference key="2">
    <citation type="submission" date="2006-12" db="EMBL/GenBank/DDBJ databases">
        <authorList>
            <consortium name="NIH - Zebrafish Gene Collection (ZGC) project"/>
        </authorList>
    </citation>
    <scope>NUCLEOTIDE SEQUENCE [LARGE SCALE MRNA]</scope>
</reference>
<reference key="3">
    <citation type="journal article" date="2016" name="Am. J. Hum. Genet.">
        <title>GNB5 mutations cause an autosomal-recessive multisystem syndrome with sinus bradycardia and cognitive disability.</title>
        <authorList>
            <person name="Lodder E.M."/>
            <person name="De Nittis P."/>
            <person name="Koopman C.D."/>
            <person name="Wiszniewski W."/>
            <person name="Moura de Souza C.F."/>
            <person name="Lahrouchi N."/>
            <person name="Guex N."/>
            <person name="Napolioni V."/>
            <person name="Tessadori F."/>
            <person name="Beekman L."/>
            <person name="Nannenberg E.A."/>
            <person name="Boualla L."/>
            <person name="Blom N.A."/>
            <person name="de Graaff W."/>
            <person name="Kamermans M."/>
            <person name="Cocciadiferro D."/>
            <person name="Malerba N."/>
            <person name="Mandriani B."/>
            <person name="Akdemir Z.H."/>
            <person name="Fish R.J."/>
            <person name="Eldomery M.K."/>
            <person name="Ratbi I."/>
            <person name="Wilde A.A."/>
            <person name="de Boer T."/>
            <person name="Simonds W.F."/>
            <person name="Neerman-Arbez M."/>
            <person name="Sutton V.R."/>
            <person name="Kok F."/>
            <person name="Lupski J.R."/>
            <person name="Reymond A."/>
            <person name="Bezzina C.R."/>
            <person name="Bakkers J."/>
            <person name="Merla G."/>
        </authorList>
    </citation>
    <scope>FUNCTION</scope>
    <scope>DISRUPTION PHENOTYPE</scope>
</reference>
<proteinExistence type="evidence at transcript level"/>
<comment type="function">
    <text evidence="1 2 5">Enhances GTPase-activating protein (GAP) activity of regulator of G protein signaling (RGS) proteins, such as RGS7 and RGS9, hence involved in the termination of the signaling initiated by the G protein coupled receptors (GPCRs) by accelerating the GTP hydrolysis on the G-alpha subunits, thereby promoting their inactivation (By similarity). Increases RGS7 GTPase-activating protein (GAP) activity, thereby regulating mood and cognition (By similarity). Increases RGS9 GTPase-activating protein (GAP) activity, hence contributes to the deactivation of G protein signaling initiated by D(2) dopamine receptors (By similarity). Along with gnb5b, plays an important role in neuronal signaling, including in the parasympathetic, but not sympathetic, control of heart rate (PubMed:27523599).</text>
</comment>
<comment type="subunit">
    <text evidence="1">May interact with RGS9; this interaction stabilizes both proteins and increases RGS9 GTPase-activating protein (GAP) activity, hence accelerating the deactivation of D(2) dopamine receptor-mediated signaling.</text>
</comment>
<comment type="subcellular location">
    <subcellularLocation>
        <location evidence="2">Membrane</location>
    </subcellularLocation>
</comment>
<comment type="disruption phenotype">
    <text evidence="5">No visible phenotype; due to the redundancy with gnb5b. Simultaneous knockout of gnb5a and gnb5b results in no striking dysmorphologic features, but the larvae show impaired swimming activity, remain small, and generally die 7-14 days post fertilization (dpf), most likely as a result of their inability to feed.</text>
</comment>
<comment type="similarity">
    <text evidence="6">Belongs to the WD repeat G protein beta family.</text>
</comment>
<gene>
    <name evidence="7" type="primary">gnb5a</name>
    <name type="ORF">zgc:158678</name>
</gene>